<gene>
    <name type="primary">L</name>
</gene>
<reference key="1">
    <citation type="journal article" date="2005" name="J. Virol.">
        <title>Characterization of the Tupaia rhabdovirus genome reveals a long open reading frame overlapping with P and a novel gene encoding a small hydrophobic protein.</title>
        <authorList>
            <person name="Springfeld C."/>
            <person name="Darai G."/>
            <person name="Cattaneo R."/>
        </authorList>
    </citation>
    <scope>NUCLEOTIDE SEQUENCE [GENOMIC RNA]</scope>
</reference>
<keyword id="KW-0067">ATP-binding</keyword>
<keyword id="KW-1035">Host cytoplasm</keyword>
<keyword id="KW-0378">Hydrolase</keyword>
<keyword id="KW-0489">Methyltransferase</keyword>
<keyword id="KW-0506">mRNA capping</keyword>
<keyword id="KW-0507">mRNA processing</keyword>
<keyword id="KW-0511">Multifunctional enzyme</keyword>
<keyword id="KW-0547">Nucleotide-binding</keyword>
<keyword id="KW-0548">Nucleotidyltransferase</keyword>
<keyword id="KW-1185">Reference proteome</keyword>
<keyword id="KW-0696">RNA-directed RNA polymerase</keyword>
<keyword id="KW-0949">S-adenosyl-L-methionine</keyword>
<keyword id="KW-0808">Transferase</keyword>
<keyword id="KW-0693">Viral RNA replication</keyword>
<keyword id="KW-1195">Viral transcription</keyword>
<keyword id="KW-0946">Virion</keyword>
<accession>Q4VKV2</accession>
<comment type="function">
    <text evidence="1">RNA-directed RNA polymerase that catalyzes the transcription of viral mRNAs, their capping and polyadenylation. The template is composed of the viral RNA tightly encapsidated by the nucleoprotein (N). The viral polymerase binds to the genomic RNA at the 3' leader promoter, and transcribes subsequently all viral mRNAs with a decreasing efficiency. The first gene is the most transcribed, and the last the least transcribed. The viral phosphoprotein acts as a processivity factor. Capping is concomitant with initiation of mRNA transcription. Indeed, a GDP polyribonucleotidyl transferase (PRNTase) adds the cap structure when the nascent RNA chain length has reached few nucleotides. Ribose 2'-O methylation of viral mRNA cap precedes and facilitates subsequent guanine-N-7 methylation, both activities being carried by the viral polymerase. Polyadenylation of mRNAs occur by a stuttering mechanism at a slipery stop site present at the end viral genes. After finishing transcription of a mRNA, the polymerase can resume transcription of the downstream gene.</text>
</comment>
<comment type="function">
    <text evidence="1">RNA-directed RNA polymerase that catalyzes the replication of viral genomic RNA. The template is composed of the viral RNA tightly encapsidated by the nucleoprotein (N). The replicase mode is dependent on intracellular N protein concentration. In this mode, the polymerase replicates the whole viral genome without recognizing transcriptional signals, and the replicated genome is not caped or polyadenylated.</text>
</comment>
<comment type="catalytic activity">
    <reaction evidence="3">
        <text>RNA(n) + a ribonucleoside 5'-triphosphate = RNA(n+1) + diphosphate</text>
        <dbReference type="Rhea" id="RHEA:21248"/>
        <dbReference type="Rhea" id="RHEA-COMP:14527"/>
        <dbReference type="Rhea" id="RHEA-COMP:17342"/>
        <dbReference type="ChEBI" id="CHEBI:33019"/>
        <dbReference type="ChEBI" id="CHEBI:61557"/>
        <dbReference type="ChEBI" id="CHEBI:140395"/>
        <dbReference type="EC" id="2.7.7.48"/>
    </reaction>
</comment>
<comment type="catalytic activity">
    <reaction evidence="1">
        <text>a 5'-end (5'-triphosphoguanosine)-adenylyl-adenylyl-cytidylyl-adenosine in mRNA + 2 S-adenosyl-L-methionine = a 5'-end (N(7)-methyl 5'-triphosphoguanosine)-(2'-O-methyladenylyl)-adenylyl-cytidylyl-adenosine in mRNA + 2 S-adenosyl-L-homocysteine + H(+)</text>
        <dbReference type="Rhea" id="RHEA:65376"/>
        <dbReference type="Rhea" id="RHEA-COMP:16797"/>
        <dbReference type="Rhea" id="RHEA-COMP:16798"/>
        <dbReference type="ChEBI" id="CHEBI:15378"/>
        <dbReference type="ChEBI" id="CHEBI:57856"/>
        <dbReference type="ChEBI" id="CHEBI:59789"/>
        <dbReference type="ChEBI" id="CHEBI:156483"/>
        <dbReference type="ChEBI" id="CHEBI:156484"/>
        <dbReference type="EC" id="2.1.1.375"/>
    </reaction>
</comment>
<comment type="catalytic activity">
    <reaction evidence="1">
        <text>a 5'-end (5'-triphosphoguanosine)-adenylyl-adenylyl-cytidylyl-adenosine in mRNA + S-adenosyl-L-methionine = a 5'-end (5'-triphosphoguanosine)-(2'-O-methyladenylyl)-adenylyl-cytidylyl-adenosine in mRNA + S-adenosyl-L-homocysteine + H(+)</text>
        <dbReference type="Rhea" id="RHEA:65380"/>
        <dbReference type="Rhea" id="RHEA-COMP:16797"/>
        <dbReference type="Rhea" id="RHEA-COMP:16801"/>
        <dbReference type="ChEBI" id="CHEBI:15378"/>
        <dbReference type="ChEBI" id="CHEBI:57856"/>
        <dbReference type="ChEBI" id="CHEBI:59789"/>
        <dbReference type="ChEBI" id="CHEBI:156482"/>
        <dbReference type="ChEBI" id="CHEBI:156484"/>
    </reaction>
</comment>
<comment type="catalytic activity">
    <reaction evidence="2">
        <text>a 5'-end triphospho-adenylyl-adenylyl-cytidylyl-adenosine in mRNA + GDP + H(+) = a 5'-end (5'-triphosphoguanosine)-adenylyl-adenylyl-cytidylyl-adenosine in mRNA + diphosphate</text>
        <dbReference type="Rhea" id="RHEA:65436"/>
        <dbReference type="Rhea" id="RHEA-COMP:16797"/>
        <dbReference type="Rhea" id="RHEA-COMP:16799"/>
        <dbReference type="ChEBI" id="CHEBI:15378"/>
        <dbReference type="ChEBI" id="CHEBI:33019"/>
        <dbReference type="ChEBI" id="CHEBI:58189"/>
        <dbReference type="ChEBI" id="CHEBI:156484"/>
        <dbReference type="ChEBI" id="CHEBI:156503"/>
        <dbReference type="EC" id="2.7.7.88"/>
    </reaction>
</comment>
<comment type="catalytic activity">
    <reaction evidence="1">
        <text>a 5'-end (5'-triphosphoguanosine)-(2'-O-methyladenylyl)-adenylyl-cytidylyl-adenosine in mRNA + S-adenosyl-L-methionine = a 5'-end (N(7)-methyl 5'-triphosphoguanosine)-(2'-O-methyladenylyl)-adenylyl-cytidylyl-adenosine in mRNA + S-adenosyl-L-homocysteine</text>
        <dbReference type="Rhea" id="RHEA:65440"/>
        <dbReference type="Rhea" id="RHEA-COMP:16798"/>
        <dbReference type="Rhea" id="RHEA-COMP:16801"/>
        <dbReference type="ChEBI" id="CHEBI:57856"/>
        <dbReference type="ChEBI" id="CHEBI:59789"/>
        <dbReference type="ChEBI" id="CHEBI:156482"/>
        <dbReference type="ChEBI" id="CHEBI:156483"/>
    </reaction>
</comment>
<comment type="catalytic activity">
    <reaction evidence="2">
        <text>GTP + H2O = GDP + phosphate + H(+)</text>
        <dbReference type="Rhea" id="RHEA:19669"/>
        <dbReference type="ChEBI" id="CHEBI:15377"/>
        <dbReference type="ChEBI" id="CHEBI:15378"/>
        <dbReference type="ChEBI" id="CHEBI:37565"/>
        <dbReference type="ChEBI" id="CHEBI:43474"/>
        <dbReference type="ChEBI" id="CHEBI:58189"/>
    </reaction>
</comment>
<comment type="subunit">
    <text evidence="1">May form homodimer. Interacts with the P protein.</text>
</comment>
<comment type="subcellular location">
    <subcellularLocation>
        <location evidence="1">Virion</location>
    </subcellularLocation>
    <subcellularLocation>
        <location evidence="1">Host cytoplasm</location>
    </subcellularLocation>
    <text evidence="1">L and P are packaged asymmetrically towards the blunt end of the virus.</text>
</comment>
<comment type="similarity">
    <text evidence="5">Belongs to the rhabdoviridae protein L family.</text>
</comment>
<organism>
    <name type="scientific">Tupaia virus (isolate Tupaia/Thailand/-/1986)</name>
    <name type="common">TUPV</name>
    <dbReference type="NCBI Taxonomy" id="1560034"/>
    <lineage>
        <taxon>Viruses</taxon>
        <taxon>Riboviria</taxon>
        <taxon>Orthornavirae</taxon>
        <taxon>Negarnaviricota</taxon>
        <taxon>Haploviricotina</taxon>
        <taxon>Monjiviricetes</taxon>
        <taxon>Mononegavirales</taxon>
        <taxon>Rhabdoviridae</taxon>
        <taxon>Alpharhabdovirinae</taxon>
        <taxon>Tupavirus</taxon>
        <taxon>Tupavirus tupaia</taxon>
    </lineage>
</organism>
<feature type="chain" id="PRO_0000432053" description="RNA-directed RNA polymerase L">
    <location>
        <begin position="1"/>
        <end position="2107"/>
    </location>
</feature>
<feature type="domain" description="RdRp catalytic" evidence="3">
    <location>
        <begin position="594"/>
        <end position="780"/>
    </location>
</feature>
<feature type="domain" description="Mononegavirus-type SAM-dependent 2'-O-MTase" evidence="4">
    <location>
        <begin position="1635"/>
        <end position="1832"/>
    </location>
</feature>
<evidence type="ECO:0000250" key="1">
    <source>
        <dbReference type="UniProtKB" id="P03523"/>
    </source>
</evidence>
<evidence type="ECO:0000250" key="2">
    <source>
        <dbReference type="UniProtKB" id="P28887"/>
    </source>
</evidence>
<evidence type="ECO:0000255" key="3">
    <source>
        <dbReference type="PROSITE-ProRule" id="PRU00539"/>
    </source>
</evidence>
<evidence type="ECO:0000255" key="4">
    <source>
        <dbReference type="PROSITE-ProRule" id="PRU00923"/>
    </source>
</evidence>
<evidence type="ECO:0000305" key="5"/>
<sequence length="2107" mass="241782">MESWPEDNVDSFESSPFWELEEDWVAPKNKGQLGSVKNTDYNLNNPLLSDGLTAFCRYLKGKSFDKIFHLHRWISTKALMEESKIRVEGNPEALHHWMGEYFLNQDIPLSRFKPLWDLVIKHSRLTHIVPELFVRSLGRYHLPYLERGERNWEKLYLTKFMEWHLLVIVMNHFEDDLSSIAPLINLKKKSSAHGICYSARVSGVGEVLVFDWILVLPNGLILNKNFVLMIKDTLLARFQTLITMYPRHDGKFTLEDVRTLLKVYSLGDRMLYTIGNEAYDLLKFVEPICNLRMTQLANKHRPLIPEFPNFRQYLEAELPELCKLSPIIMELWDTITSLDDPELVVQIFGCFRHWGHPFIDYGEGLQKLYEQVTMPKIIDDELAQALGSDLAYLVLRSQFKKTKKWFVDPSKLPMNHPLKKFVETSTWPTPKVIEDFGDKWHTLPLTQCFDIPDLVDPALIYSDKSHSVNRRSLIQHVSSGAYSKFPTKRVLTTFLTEPARDWKSFLQQINDRGLPDDALCIGLRPKERELKRAGRFFALMSWELREYFVFTEYLIKEHFIPLFKGLTMADDMTGVIKKLLECSNGHGETDYSNITISNHLDYSKWNNHQRYESNKYVFQVMGSFLGYPNLISRTHEFFQKSLIYFINRPDLMVVKGNTLEPKGQMRVCWNGQAGGLEGLRQKGWSIVNLLLIMRVGKLRNTEIKILAQGDNQVMNSHYKLPAYRTDFELLECISEIIRNNKYIMQEVDHWTQRLGLIINKDETMQSADFLIYGKVPIFRGNITIPESKKWSRVNCVTNDQLPTFGNVMSTVSSTALSVSHFSNSFLDPIEFYNLLGNFSRILLEMFNPVLNKSLLQFFTDWSQFEDVGYLISVLYLDPSLGGVCGMSLSRFLIRAFPDPVTEGLSFWRRLSTVTSDPNLRKLFLSFGNPPLGRFKMEDLTKLMEKPESLNIPSSLSAQILIRTEIREILRRNVRVIKNEIIVNAISYGMQAEEHLIRFLYSIKPLFPRFLAEFKSSTYLGLTESLVGLYENSKTIRNRFLGQREREIDDLVQRSEYVGIKYLVQVRKERTTPGPWNCSASHADRLRRLSWGQPVIGATIPHPFEMLGKVCYLFRGSGCECPDSSNYTTTFVNWDAESVMSRKGPFLPYLGSKTSESTSLINPWERETIIPLIKRAAKLRNAINWFVRSDSLLARSILNNLRALTGEDPGQGNPGFFRTGSALHRFACSRQSSGGFSALSPAYLSRFLTTTDTLQGIGDRNYDFMFQSLILYSQSSLCVQINRNVQGIVHHHISCNECLREITEPFLEGSFEYKPKDVSRHVRKWIPGGNQILTEKLRLEFQYGNWEAISDAEKTYHVGRAIGFVFSDYAFSSSAQLEESSLFPLSIRNSLTPELFYEGLIDGLIRGCSIQITHRRNVALLKKPRETLVGSVFFAITKITLNTPFLSLVRVGAIHDYIIRNSHRTPPSYPLSKWDLGGILRHYLKTRFLHLLRTGYSSRYTSVWIFADLAGIEVGGLLCLSSHLLEYSVSPNKTKLGAERLRKFKEIEINMRQKTQVDLSCLDLRRVYLCKSEVRHSVKSIDKKTVQSEAPLYKFEEEEVGYVVAWDVSYLSAPALSPKEELTVPRLQCPLISGLRTIQLATGAHYKVRSILNHFNIQFDDFLCGGDGSGGLTAMCLRWNRFSRGIFNSLLDLSGYDLRGSRPSEPSAIAALGADAARCVNRQTCWQHPSDLTDKSTWNYFVDLKAEFGLTIKLMIFDMENRDEQSFLIEDQIIDYLPRLLSRSGSLIFKTYCHRLISQQNPLLLKRLGRHFKRSCLVQTEFTSNFSSEVYVVLMDYVPGNSLAGIVDYTEMTRFLGKRFVFSNPVDEFKRALGIKRKAMEKGIPSELLPDPEVELATVLEICGLESGRAASVAEICCSKSISPKVKYLFVRSITFCSFFNLTSGFSERPHVPSDSKLLRFFSFFIGLEYWWSWVSEELPRFERMNQFLREDLFITHESKKGKDFWVRKVFLGAFDIGVVKRLRLQGSLAGIGSAIRSLRRAVPLNETGLTLSVSELIGRFDRGLTPSVLSSRSNLLTYIQDYRSNLDLPVSSEIINTGIRGDMATTE</sequence>
<name>L_TUPVT</name>
<protein>
    <recommendedName>
        <fullName>RNA-directed RNA polymerase L</fullName>
        <shortName>Protein L</shortName>
    </recommendedName>
    <alternativeName>
        <fullName>Large structural protein</fullName>
    </alternativeName>
    <alternativeName>
        <fullName>Replicase</fullName>
    </alternativeName>
    <alternativeName>
        <fullName>Transcriptase</fullName>
    </alternativeName>
    <domain>
        <recommendedName>
            <fullName>RNA-directed RNA polymerase</fullName>
            <ecNumber evidence="2">2.7.7.48</ecNumber>
        </recommendedName>
    </domain>
    <domain>
        <recommendedName>
            <fullName evidence="1">GTP phosphohydrolase</fullName>
            <ecNumber evidence="1">3.6.1.-</ecNumber>
        </recommendedName>
    </domain>
    <domain>
        <recommendedName>
            <fullName evidence="5">GDP polyribonucleotidyltransferase</fullName>
            <ecNumber evidence="1">2.7.7.88</ecNumber>
        </recommendedName>
        <alternativeName>
            <fullName evidence="5">PRNTase</fullName>
        </alternativeName>
    </domain>
    <domain>
        <recommendedName>
            <fullName evidence="5">mRNA cap methyltransferase</fullName>
            <ecNumber evidence="1">2.1.1.375</ecNumber>
        </recommendedName>
        <alternativeName>
            <fullName evidence="1">mRNA (guanine-N(7)-)-methyltransferase</fullName>
            <shortName evidence="1">G-N7-MTase</shortName>
        </alternativeName>
        <alternativeName>
            <fullName evidence="1">mRNA (nucleoside-2'-O-)-methyltransferase</fullName>
            <shortName evidence="1">N1-2'-O-MTase</shortName>
        </alternativeName>
    </domain>
</protein>
<dbReference type="EC" id="2.7.7.48" evidence="2"/>
<dbReference type="EC" id="3.6.1.-" evidence="1"/>
<dbReference type="EC" id="2.7.7.88" evidence="1"/>
<dbReference type="EC" id="2.1.1.375" evidence="1"/>
<dbReference type="EMBL" id="AY840978">
    <property type="protein sequence ID" value="AAX47602.1"/>
    <property type="molecule type" value="Genomic_RNA"/>
</dbReference>
<dbReference type="RefSeq" id="YP_238534.1">
    <property type="nucleotide sequence ID" value="NC_007020.1"/>
</dbReference>
<dbReference type="SMR" id="Q4VKV2"/>
<dbReference type="GeneID" id="3416615"/>
<dbReference type="KEGG" id="vg:3416615"/>
<dbReference type="Proteomes" id="UP000029771">
    <property type="component" value="Segment"/>
</dbReference>
<dbReference type="GO" id="GO:0030430">
    <property type="term" value="C:host cell cytoplasm"/>
    <property type="evidence" value="ECO:0007669"/>
    <property type="project" value="UniProtKB-SubCell"/>
</dbReference>
<dbReference type="GO" id="GO:0044423">
    <property type="term" value="C:virion component"/>
    <property type="evidence" value="ECO:0007669"/>
    <property type="project" value="UniProtKB-KW"/>
</dbReference>
<dbReference type="GO" id="GO:0005524">
    <property type="term" value="F:ATP binding"/>
    <property type="evidence" value="ECO:0007669"/>
    <property type="project" value="UniProtKB-KW"/>
</dbReference>
<dbReference type="GO" id="GO:0003924">
    <property type="term" value="F:GTPase activity"/>
    <property type="evidence" value="ECO:0007669"/>
    <property type="project" value="RHEA"/>
</dbReference>
<dbReference type="GO" id="GO:0004482">
    <property type="term" value="F:mRNA 5'-cap (guanine-N7-)-methyltransferase activity"/>
    <property type="evidence" value="ECO:0007669"/>
    <property type="project" value="InterPro"/>
</dbReference>
<dbReference type="GO" id="GO:0003968">
    <property type="term" value="F:RNA-directed RNA polymerase activity"/>
    <property type="evidence" value="ECO:0007669"/>
    <property type="project" value="UniProtKB-KW"/>
</dbReference>
<dbReference type="GO" id="GO:0019083">
    <property type="term" value="P:viral transcription"/>
    <property type="evidence" value="ECO:0007669"/>
    <property type="project" value="UniProtKB-KW"/>
</dbReference>
<dbReference type="InterPro" id="IPR039530">
    <property type="entry name" value="L_methyltransferase_rhabdo"/>
</dbReference>
<dbReference type="InterPro" id="IPR039736">
    <property type="entry name" value="L_poly_C"/>
</dbReference>
<dbReference type="InterPro" id="IPR048398">
    <property type="entry name" value="Methyltrans_Mon_C"/>
</dbReference>
<dbReference type="InterPro" id="IPR048397">
    <property type="entry name" value="Methyltrans_Mon_CD"/>
</dbReference>
<dbReference type="InterPro" id="IPR026890">
    <property type="entry name" value="Mononeg_mRNAcap"/>
</dbReference>
<dbReference type="InterPro" id="IPR014023">
    <property type="entry name" value="Mononeg_RNA_pol_cat"/>
</dbReference>
<dbReference type="InterPro" id="IPR025786">
    <property type="entry name" value="Mononega_L_MeTrfase"/>
</dbReference>
<dbReference type="InterPro" id="IPR017234">
    <property type="entry name" value="RNA-dir_pol_rhabdovirus"/>
</dbReference>
<dbReference type="NCBIfam" id="TIGR04198">
    <property type="entry name" value="paramyx_RNAcap"/>
    <property type="match status" value="1"/>
</dbReference>
<dbReference type="Pfam" id="PF21080">
    <property type="entry name" value="Methyltrans_Mon_1st"/>
    <property type="match status" value="1"/>
</dbReference>
<dbReference type="Pfam" id="PF14314">
    <property type="entry name" value="Methyltrans_Mon_2nd"/>
    <property type="match status" value="1"/>
</dbReference>
<dbReference type="Pfam" id="PF21081">
    <property type="entry name" value="Methyltrans_Mon_3rd"/>
    <property type="match status" value="1"/>
</dbReference>
<dbReference type="Pfam" id="PF14318">
    <property type="entry name" value="Mononeg_mRNAcap"/>
    <property type="match status" value="1"/>
</dbReference>
<dbReference type="Pfam" id="PF00946">
    <property type="entry name" value="Mononeg_RNA_pol"/>
    <property type="match status" value="1"/>
</dbReference>
<dbReference type="PIRSF" id="PIRSF037546">
    <property type="entry name" value="RNA_pol_RhabdoV_sub"/>
    <property type="match status" value="1"/>
</dbReference>
<dbReference type="PROSITE" id="PS50526">
    <property type="entry name" value="RDRP_SSRNA_NEG_NONSEG"/>
    <property type="match status" value="1"/>
</dbReference>
<dbReference type="PROSITE" id="PS51590">
    <property type="entry name" value="SAM_MT_MNV_L"/>
    <property type="match status" value="1"/>
</dbReference>
<organismHost>
    <name type="scientific">Tupaia</name>
    <dbReference type="NCBI Taxonomy" id="9394"/>
</organismHost>
<proteinExistence type="inferred from homology"/>